<feature type="chain" id="PRO_1000076618" description="dCTP deaminase">
    <location>
        <begin position="1"/>
        <end position="193"/>
    </location>
</feature>
<feature type="region of interest" description="Disordered" evidence="2">
    <location>
        <begin position="169"/>
        <end position="193"/>
    </location>
</feature>
<feature type="active site" description="Proton donor/acceptor" evidence="1">
    <location>
        <position position="138"/>
    </location>
</feature>
<feature type="binding site" evidence="1">
    <location>
        <begin position="110"/>
        <end position="115"/>
    </location>
    <ligand>
        <name>dCTP</name>
        <dbReference type="ChEBI" id="CHEBI:61481"/>
    </ligand>
</feature>
<feature type="binding site" evidence="1">
    <location>
        <position position="128"/>
    </location>
    <ligand>
        <name>dCTP</name>
        <dbReference type="ChEBI" id="CHEBI:61481"/>
    </ligand>
</feature>
<feature type="binding site" evidence="1">
    <location>
        <begin position="136"/>
        <end position="138"/>
    </location>
    <ligand>
        <name>dCTP</name>
        <dbReference type="ChEBI" id="CHEBI:61481"/>
    </ligand>
</feature>
<feature type="binding site" evidence="1">
    <location>
        <position position="171"/>
    </location>
    <ligand>
        <name>dCTP</name>
        <dbReference type="ChEBI" id="CHEBI:61481"/>
    </ligand>
</feature>
<feature type="binding site" evidence="1">
    <location>
        <position position="178"/>
    </location>
    <ligand>
        <name>dCTP</name>
        <dbReference type="ChEBI" id="CHEBI:61481"/>
    </ligand>
</feature>
<feature type="binding site" evidence="1">
    <location>
        <position position="182"/>
    </location>
    <ligand>
        <name>dCTP</name>
        <dbReference type="ChEBI" id="CHEBI:61481"/>
    </ligand>
</feature>
<name>DCD_ECOLC</name>
<keyword id="KW-0378">Hydrolase</keyword>
<keyword id="KW-0546">Nucleotide metabolism</keyword>
<keyword id="KW-0547">Nucleotide-binding</keyword>
<protein>
    <recommendedName>
        <fullName evidence="1">dCTP deaminase</fullName>
        <ecNumber evidence="1">3.5.4.13</ecNumber>
    </recommendedName>
    <alternativeName>
        <fullName evidence="1">Deoxycytidine triphosphate deaminase</fullName>
    </alternativeName>
</protein>
<dbReference type="EC" id="3.5.4.13" evidence="1"/>
<dbReference type="EMBL" id="CP000946">
    <property type="protein sequence ID" value="ACA77235.1"/>
    <property type="molecule type" value="Genomic_DNA"/>
</dbReference>
<dbReference type="RefSeq" id="WP_001234767.1">
    <property type="nucleotide sequence ID" value="NZ_MTFT01000021.1"/>
</dbReference>
<dbReference type="SMR" id="B1IZ09"/>
<dbReference type="GeneID" id="93775126"/>
<dbReference type="KEGG" id="ecl:EcolC_1576"/>
<dbReference type="HOGENOM" id="CLU_087476_2_0_6"/>
<dbReference type="UniPathway" id="UPA00610">
    <property type="reaction ID" value="UER00665"/>
</dbReference>
<dbReference type="GO" id="GO:0008829">
    <property type="term" value="F:dCTP deaminase activity"/>
    <property type="evidence" value="ECO:0007669"/>
    <property type="project" value="UniProtKB-UniRule"/>
</dbReference>
<dbReference type="GO" id="GO:0000166">
    <property type="term" value="F:nucleotide binding"/>
    <property type="evidence" value="ECO:0007669"/>
    <property type="project" value="UniProtKB-KW"/>
</dbReference>
<dbReference type="GO" id="GO:0006226">
    <property type="term" value="P:dUMP biosynthetic process"/>
    <property type="evidence" value="ECO:0007669"/>
    <property type="project" value="UniProtKB-UniPathway"/>
</dbReference>
<dbReference type="GO" id="GO:0006229">
    <property type="term" value="P:dUTP biosynthetic process"/>
    <property type="evidence" value="ECO:0007669"/>
    <property type="project" value="UniProtKB-UniRule"/>
</dbReference>
<dbReference type="GO" id="GO:0015949">
    <property type="term" value="P:nucleobase-containing small molecule interconversion"/>
    <property type="evidence" value="ECO:0007669"/>
    <property type="project" value="TreeGrafter"/>
</dbReference>
<dbReference type="CDD" id="cd07557">
    <property type="entry name" value="trimeric_dUTPase"/>
    <property type="match status" value="1"/>
</dbReference>
<dbReference type="FunFam" id="2.70.40.10:FF:000003">
    <property type="entry name" value="dCTP deaminase"/>
    <property type="match status" value="1"/>
</dbReference>
<dbReference type="Gene3D" id="2.70.40.10">
    <property type="match status" value="1"/>
</dbReference>
<dbReference type="HAMAP" id="MF_00146">
    <property type="entry name" value="dCTP_deaminase"/>
    <property type="match status" value="1"/>
</dbReference>
<dbReference type="InterPro" id="IPR011962">
    <property type="entry name" value="dCTP_deaminase"/>
</dbReference>
<dbReference type="InterPro" id="IPR036157">
    <property type="entry name" value="dUTPase-like_sf"/>
</dbReference>
<dbReference type="InterPro" id="IPR033704">
    <property type="entry name" value="dUTPase_trimeric"/>
</dbReference>
<dbReference type="NCBIfam" id="TIGR02274">
    <property type="entry name" value="dCTP_deam"/>
    <property type="match status" value="1"/>
</dbReference>
<dbReference type="PANTHER" id="PTHR42680">
    <property type="entry name" value="DCTP DEAMINASE"/>
    <property type="match status" value="1"/>
</dbReference>
<dbReference type="PANTHER" id="PTHR42680:SF3">
    <property type="entry name" value="DCTP DEAMINASE"/>
    <property type="match status" value="1"/>
</dbReference>
<dbReference type="Pfam" id="PF22769">
    <property type="entry name" value="DCD"/>
    <property type="match status" value="1"/>
</dbReference>
<dbReference type="SUPFAM" id="SSF51283">
    <property type="entry name" value="dUTPase-like"/>
    <property type="match status" value="1"/>
</dbReference>
<organism>
    <name type="scientific">Escherichia coli (strain ATCC 8739 / DSM 1576 / NBRC 3972 / NCIMB 8545 / WDCM 00012 / Crooks)</name>
    <dbReference type="NCBI Taxonomy" id="481805"/>
    <lineage>
        <taxon>Bacteria</taxon>
        <taxon>Pseudomonadati</taxon>
        <taxon>Pseudomonadota</taxon>
        <taxon>Gammaproteobacteria</taxon>
        <taxon>Enterobacterales</taxon>
        <taxon>Enterobacteriaceae</taxon>
        <taxon>Escherichia</taxon>
    </lineage>
</organism>
<proteinExistence type="inferred from homology"/>
<accession>B1IZ09</accession>
<gene>
    <name evidence="1" type="primary">dcd</name>
    <name type="ordered locus">EcolC_1576</name>
</gene>
<evidence type="ECO:0000255" key="1">
    <source>
        <dbReference type="HAMAP-Rule" id="MF_00146"/>
    </source>
</evidence>
<evidence type="ECO:0000256" key="2">
    <source>
        <dbReference type="SAM" id="MobiDB-lite"/>
    </source>
</evidence>
<reference key="1">
    <citation type="submission" date="2008-02" db="EMBL/GenBank/DDBJ databases">
        <title>Complete sequence of Escherichia coli C str. ATCC 8739.</title>
        <authorList>
            <person name="Copeland A."/>
            <person name="Lucas S."/>
            <person name="Lapidus A."/>
            <person name="Glavina del Rio T."/>
            <person name="Dalin E."/>
            <person name="Tice H."/>
            <person name="Bruce D."/>
            <person name="Goodwin L."/>
            <person name="Pitluck S."/>
            <person name="Kiss H."/>
            <person name="Brettin T."/>
            <person name="Detter J.C."/>
            <person name="Han C."/>
            <person name="Kuske C.R."/>
            <person name="Schmutz J."/>
            <person name="Larimer F."/>
            <person name="Land M."/>
            <person name="Hauser L."/>
            <person name="Kyrpides N."/>
            <person name="Mikhailova N."/>
            <person name="Ingram L."/>
            <person name="Richardson P."/>
        </authorList>
    </citation>
    <scope>NUCLEOTIDE SEQUENCE [LARGE SCALE GENOMIC DNA]</scope>
    <source>
        <strain>ATCC 8739 / DSM 1576 / NBRC 3972 / NCIMB 8545 / WDCM 00012 / Crooks</strain>
    </source>
</reference>
<sequence>MRLCDRDIEAWLDEGRLSINPRPPVERINGATVDVRLGNKFRTFRGHTAAFIDLSGPKDEVSAALDRVMSDEIVLDEGEAFYLHPGELALAVTLESVTLPADLVGWLDGRSSLARLGLMVHVTAHRIDPGWSGCIVLEFYNSGKLPLALRPGMLIGALSFEPLSGPAARPYNRREDAKYRNQQGAVASRIDKD</sequence>
<comment type="function">
    <text evidence="1">Catalyzes the deamination of dCTP to dUTP.</text>
</comment>
<comment type="catalytic activity">
    <reaction evidence="1">
        <text>dCTP + H2O + H(+) = dUTP + NH4(+)</text>
        <dbReference type="Rhea" id="RHEA:22680"/>
        <dbReference type="ChEBI" id="CHEBI:15377"/>
        <dbReference type="ChEBI" id="CHEBI:15378"/>
        <dbReference type="ChEBI" id="CHEBI:28938"/>
        <dbReference type="ChEBI" id="CHEBI:61481"/>
        <dbReference type="ChEBI" id="CHEBI:61555"/>
        <dbReference type="EC" id="3.5.4.13"/>
    </reaction>
</comment>
<comment type="pathway">
    <text evidence="1">Pyrimidine metabolism; dUMP biosynthesis; dUMP from dCTP (dUTP route): step 1/2.</text>
</comment>
<comment type="subunit">
    <text evidence="1">Homotrimer.</text>
</comment>
<comment type="similarity">
    <text evidence="1">Belongs to the dCTP deaminase family.</text>
</comment>